<comment type="function">
    <text evidence="1">3'-to-5' exoribonuclease specific for small oligoribonucleotides.</text>
</comment>
<comment type="subcellular location">
    <subcellularLocation>
        <location evidence="1">Cytoplasm</location>
    </subcellularLocation>
</comment>
<comment type="similarity">
    <text evidence="1">Belongs to the oligoribonuclease family.</text>
</comment>
<reference key="1">
    <citation type="journal article" date="2007" name="Nat. Biotechnol.">
        <title>Genome sequence and identification of candidate vaccine antigens from the animal pathogen Dichelobacter nodosus.</title>
        <authorList>
            <person name="Myers G.S.A."/>
            <person name="Parker D."/>
            <person name="Al-Hasani K."/>
            <person name="Kennan R.M."/>
            <person name="Seemann T."/>
            <person name="Ren Q."/>
            <person name="Badger J.H."/>
            <person name="Selengut J.D."/>
            <person name="Deboy R.T."/>
            <person name="Tettelin H."/>
            <person name="Boyce J.D."/>
            <person name="McCarl V.P."/>
            <person name="Han X."/>
            <person name="Nelson W.C."/>
            <person name="Madupu R."/>
            <person name="Mohamoud Y."/>
            <person name="Holley T."/>
            <person name="Fedorova N."/>
            <person name="Khouri H."/>
            <person name="Bottomley S.P."/>
            <person name="Whittington R.J."/>
            <person name="Adler B."/>
            <person name="Songer J.G."/>
            <person name="Rood J.I."/>
            <person name="Paulsen I.T."/>
        </authorList>
    </citation>
    <scope>NUCLEOTIDE SEQUENCE [LARGE SCALE GENOMIC DNA]</scope>
    <source>
        <strain>VCS1703A</strain>
    </source>
</reference>
<keyword id="KW-0963">Cytoplasm</keyword>
<keyword id="KW-0269">Exonuclease</keyword>
<keyword id="KW-0378">Hydrolase</keyword>
<keyword id="KW-0540">Nuclease</keyword>
<keyword id="KW-1185">Reference proteome</keyword>
<accession>A5EY84</accession>
<name>ORN_DICNV</name>
<organism>
    <name type="scientific">Dichelobacter nodosus (strain VCS1703A)</name>
    <dbReference type="NCBI Taxonomy" id="246195"/>
    <lineage>
        <taxon>Bacteria</taxon>
        <taxon>Pseudomonadati</taxon>
        <taxon>Pseudomonadota</taxon>
        <taxon>Gammaproteobacteria</taxon>
        <taxon>Cardiobacteriales</taxon>
        <taxon>Cardiobacteriaceae</taxon>
        <taxon>Dichelobacter</taxon>
    </lineage>
</organism>
<proteinExistence type="inferred from homology"/>
<sequence>MDKKNNLVWIDLEMTGLDPQHDEIIEIATIVTDAQLNILAEGPVIAVYQPEPILAQMDAWNQKHHGASGLIERVRQSSFNTLEAEAQTLSFLEQYSEKGRSPICGNSICQDRRFLSRLMPRLEAFFHYRNLDVSTIKELVARWYPEHYFHKNTTHQALQDIRDSIDELRHYRQRIFVNPS</sequence>
<feature type="chain" id="PRO_1000004246" description="Oligoribonuclease">
    <location>
        <begin position="1"/>
        <end position="180"/>
    </location>
</feature>
<feature type="domain" description="Exonuclease" evidence="1">
    <location>
        <begin position="7"/>
        <end position="168"/>
    </location>
</feature>
<feature type="active site" evidence="1">
    <location>
        <position position="128"/>
    </location>
</feature>
<gene>
    <name evidence="1" type="primary">orn</name>
    <name type="ordered locus">DNO_0904</name>
</gene>
<dbReference type="EC" id="3.1.15.-" evidence="1"/>
<dbReference type="EMBL" id="CP000513">
    <property type="protein sequence ID" value="ABQ14084.1"/>
    <property type="molecule type" value="Genomic_DNA"/>
</dbReference>
<dbReference type="RefSeq" id="WP_012031220.1">
    <property type="nucleotide sequence ID" value="NC_009446.1"/>
</dbReference>
<dbReference type="SMR" id="A5EY84"/>
<dbReference type="STRING" id="246195.DNO_0904"/>
<dbReference type="KEGG" id="dno:DNO_0904"/>
<dbReference type="eggNOG" id="COG1949">
    <property type="taxonomic scope" value="Bacteria"/>
</dbReference>
<dbReference type="HOGENOM" id="CLU_064761_2_0_6"/>
<dbReference type="OrthoDB" id="9801329at2"/>
<dbReference type="Proteomes" id="UP000000248">
    <property type="component" value="Chromosome"/>
</dbReference>
<dbReference type="GO" id="GO:0005737">
    <property type="term" value="C:cytoplasm"/>
    <property type="evidence" value="ECO:0007669"/>
    <property type="project" value="UniProtKB-SubCell"/>
</dbReference>
<dbReference type="GO" id="GO:0000175">
    <property type="term" value="F:3'-5'-RNA exonuclease activity"/>
    <property type="evidence" value="ECO:0007669"/>
    <property type="project" value="InterPro"/>
</dbReference>
<dbReference type="GO" id="GO:0003676">
    <property type="term" value="F:nucleic acid binding"/>
    <property type="evidence" value="ECO:0007669"/>
    <property type="project" value="InterPro"/>
</dbReference>
<dbReference type="GO" id="GO:0006259">
    <property type="term" value="P:DNA metabolic process"/>
    <property type="evidence" value="ECO:0007669"/>
    <property type="project" value="UniProtKB-ARBA"/>
</dbReference>
<dbReference type="CDD" id="cd06135">
    <property type="entry name" value="Orn"/>
    <property type="match status" value="1"/>
</dbReference>
<dbReference type="FunFam" id="3.30.420.10:FF:000003">
    <property type="entry name" value="Oligoribonuclease"/>
    <property type="match status" value="1"/>
</dbReference>
<dbReference type="Gene3D" id="3.30.420.10">
    <property type="entry name" value="Ribonuclease H-like superfamily/Ribonuclease H"/>
    <property type="match status" value="1"/>
</dbReference>
<dbReference type="HAMAP" id="MF_00045">
    <property type="entry name" value="Oligoribonuclease"/>
    <property type="match status" value="1"/>
</dbReference>
<dbReference type="InterPro" id="IPR013520">
    <property type="entry name" value="Exonuclease_RNaseT/DNA_pol3"/>
</dbReference>
<dbReference type="InterPro" id="IPR022894">
    <property type="entry name" value="Oligoribonuclease"/>
</dbReference>
<dbReference type="InterPro" id="IPR012337">
    <property type="entry name" value="RNaseH-like_sf"/>
</dbReference>
<dbReference type="InterPro" id="IPR036397">
    <property type="entry name" value="RNaseH_sf"/>
</dbReference>
<dbReference type="NCBIfam" id="NF003765">
    <property type="entry name" value="PRK05359.1"/>
    <property type="match status" value="1"/>
</dbReference>
<dbReference type="PANTHER" id="PTHR11046">
    <property type="entry name" value="OLIGORIBONUCLEASE, MITOCHONDRIAL"/>
    <property type="match status" value="1"/>
</dbReference>
<dbReference type="PANTHER" id="PTHR11046:SF0">
    <property type="entry name" value="OLIGORIBONUCLEASE, MITOCHONDRIAL"/>
    <property type="match status" value="1"/>
</dbReference>
<dbReference type="Pfam" id="PF00929">
    <property type="entry name" value="RNase_T"/>
    <property type="match status" value="1"/>
</dbReference>
<dbReference type="SMART" id="SM00479">
    <property type="entry name" value="EXOIII"/>
    <property type="match status" value="1"/>
</dbReference>
<dbReference type="SUPFAM" id="SSF53098">
    <property type="entry name" value="Ribonuclease H-like"/>
    <property type="match status" value="1"/>
</dbReference>
<protein>
    <recommendedName>
        <fullName evidence="1">Oligoribonuclease</fullName>
        <ecNumber evidence="1">3.1.15.-</ecNumber>
    </recommendedName>
</protein>
<evidence type="ECO:0000255" key="1">
    <source>
        <dbReference type="HAMAP-Rule" id="MF_00045"/>
    </source>
</evidence>